<sequence>MSAAKSVSIGIDLGTTYSCVGVFQHGKVEIIANDQGNRTTPSYVAFTDTERLIGDAAKNQVALNPSNTVFDAKRLIGRRFDEPVVQADMKHWPFKVVSEGGKPKIQVDYKGENKTFFPEEISSMVLVKMKEIAEAYLGHKVSNAVITVPAYFNDSQRQATKDAGVIAGLNVQRIINEPTAAAIAYGLDKGKSGERNVLIFDLGGGTFDVSILTIEDGIFEVKATAGDTHLGGEDFDNRMVNHFVEEFKRKHKKDISQNKRALRRLRTACERAKRTLSSSSQASIEIDSLFEGIDFYTSVTRARFEELCSDLFRGTLEPVEKALRDAKMDKGQIHDVVLVGGSTRIPKIQKLLQDFFNGRELNKSINPDEAVAYGAAVQAAILSGDTSGNVQDLLLLDVAPLSLGIETAGGVMTALIKRNTTIPTKQTQVFSTYADNQPGVLIQVYEGERAMTKDNNLLGKFDLTGIPPAPRGVPQIEVTFDIDANGILNVSAVDKSTGNENKITITNDKGRLSKEDIERMVQEAEKYKAEDEQQRDKIAAKNSLESLAFNLKSSAQDDSLKDKISQEDRKRVVEKCDETIAWLENNQLADKDEFQHKQKELEKVCNPIISKLYQGGMPSGSCREQARADSQGPTIEEVD</sequence>
<proteinExistence type="inferred from homology"/>
<feature type="chain" id="PRO_0000078288" description="Heat shock 70 kDa protein 1">
    <location>
        <begin position="1"/>
        <end position="639"/>
    </location>
</feature>
<feature type="region of interest" description="Disordered" evidence="1">
    <location>
        <begin position="616"/>
        <end position="639"/>
    </location>
</feature>
<organism>
    <name type="scientific">Oryzias latipes</name>
    <name type="common">Japanese rice fish</name>
    <name type="synonym">Japanese killifish</name>
    <dbReference type="NCBI Taxonomy" id="8090"/>
    <lineage>
        <taxon>Eukaryota</taxon>
        <taxon>Metazoa</taxon>
        <taxon>Chordata</taxon>
        <taxon>Craniata</taxon>
        <taxon>Vertebrata</taxon>
        <taxon>Euteleostomi</taxon>
        <taxon>Actinopterygii</taxon>
        <taxon>Neopterygii</taxon>
        <taxon>Teleostei</taxon>
        <taxon>Neoteleostei</taxon>
        <taxon>Acanthomorphata</taxon>
        <taxon>Ovalentaria</taxon>
        <taxon>Atherinomorphae</taxon>
        <taxon>Beloniformes</taxon>
        <taxon>Adrianichthyidae</taxon>
        <taxon>Oryziinae</taxon>
        <taxon>Oryzias</taxon>
    </lineage>
</organism>
<comment type="similarity">
    <text evidence="2">Belongs to the heat shock protein 70 family.</text>
</comment>
<protein>
    <recommendedName>
        <fullName>Heat shock 70 kDa protein 1</fullName>
        <shortName>HSP70-1</shortName>
    </recommendedName>
</protein>
<evidence type="ECO:0000256" key="1">
    <source>
        <dbReference type="SAM" id="MobiDB-lite"/>
    </source>
</evidence>
<evidence type="ECO:0000305" key="2"/>
<accession>Q9I8F9</accession>
<reference key="1">
    <citation type="submission" date="2000-07" db="EMBL/GenBank/DDBJ databases">
        <title>Medaka HSP70 gene cloning.</title>
        <authorList>
            <person name="Naruse K."/>
            <person name="Sakuragi M."/>
        </authorList>
    </citation>
    <scope>NUCLEOTIDE SEQUENCE [GENOMIC DNA]</scope>
</reference>
<keyword id="KW-0067">ATP-binding</keyword>
<keyword id="KW-0547">Nucleotide-binding</keyword>
<keyword id="KW-1185">Reference proteome</keyword>
<keyword id="KW-0346">Stress response</keyword>
<name>HSP71_ORYLA</name>
<dbReference type="EMBL" id="AF286875">
    <property type="protein sequence ID" value="AAF91485.1"/>
    <property type="molecule type" value="Genomic_DNA"/>
</dbReference>
<dbReference type="SMR" id="Q9I8F9"/>
<dbReference type="FunCoup" id="Q9I8F9">
    <property type="interactions" value="1340"/>
</dbReference>
<dbReference type="STRING" id="8090.ENSORLP00000034101"/>
<dbReference type="eggNOG" id="KOG0101">
    <property type="taxonomic scope" value="Eukaryota"/>
</dbReference>
<dbReference type="InParanoid" id="Q9I8F9"/>
<dbReference type="OrthoDB" id="2401965at2759"/>
<dbReference type="Proteomes" id="UP000001038">
    <property type="component" value="Unplaced"/>
</dbReference>
<dbReference type="Proteomes" id="UP000265180">
    <property type="component" value="Chromosome 9"/>
</dbReference>
<dbReference type="Proteomes" id="UP000265200">
    <property type="component" value="Chromosome 9"/>
</dbReference>
<dbReference type="GO" id="GO:0005737">
    <property type="term" value="C:cytoplasm"/>
    <property type="evidence" value="ECO:0000318"/>
    <property type="project" value="GO_Central"/>
</dbReference>
<dbReference type="GO" id="GO:0005829">
    <property type="term" value="C:cytosol"/>
    <property type="evidence" value="ECO:0000318"/>
    <property type="project" value="GO_Central"/>
</dbReference>
<dbReference type="GO" id="GO:0005634">
    <property type="term" value="C:nucleus"/>
    <property type="evidence" value="ECO:0000318"/>
    <property type="project" value="GO_Central"/>
</dbReference>
<dbReference type="GO" id="GO:0005886">
    <property type="term" value="C:plasma membrane"/>
    <property type="evidence" value="ECO:0000318"/>
    <property type="project" value="GO_Central"/>
</dbReference>
<dbReference type="GO" id="GO:0005524">
    <property type="term" value="F:ATP binding"/>
    <property type="evidence" value="ECO:0007669"/>
    <property type="project" value="UniProtKB-KW"/>
</dbReference>
<dbReference type="GO" id="GO:0016887">
    <property type="term" value="F:ATP hydrolysis activity"/>
    <property type="evidence" value="ECO:0000318"/>
    <property type="project" value="GO_Central"/>
</dbReference>
<dbReference type="GO" id="GO:0140662">
    <property type="term" value="F:ATP-dependent protein folding chaperone"/>
    <property type="evidence" value="ECO:0007669"/>
    <property type="project" value="InterPro"/>
</dbReference>
<dbReference type="GO" id="GO:0031072">
    <property type="term" value="F:heat shock protein binding"/>
    <property type="evidence" value="ECO:0000318"/>
    <property type="project" value="GO_Central"/>
</dbReference>
<dbReference type="GO" id="GO:0044183">
    <property type="term" value="F:protein folding chaperone"/>
    <property type="evidence" value="ECO:0000318"/>
    <property type="project" value="GO_Central"/>
</dbReference>
<dbReference type="GO" id="GO:0051085">
    <property type="term" value="P:chaperone cofactor-dependent protein refolding"/>
    <property type="evidence" value="ECO:0000318"/>
    <property type="project" value="GO_Central"/>
</dbReference>
<dbReference type="GO" id="GO:0042026">
    <property type="term" value="P:protein refolding"/>
    <property type="evidence" value="ECO:0000318"/>
    <property type="project" value="GO_Central"/>
</dbReference>
<dbReference type="CDD" id="cd10233">
    <property type="entry name" value="ASKHA_NBD_HSP70_HSPA1"/>
    <property type="match status" value="1"/>
</dbReference>
<dbReference type="FunFam" id="2.60.34.10:FF:000002">
    <property type="entry name" value="Heat shock 70 kDa"/>
    <property type="match status" value="1"/>
</dbReference>
<dbReference type="FunFam" id="3.30.420.40:FF:000172">
    <property type="entry name" value="Heat shock 70 kDa protein"/>
    <property type="match status" value="1"/>
</dbReference>
<dbReference type="FunFam" id="1.20.1270.10:FF:000032">
    <property type="entry name" value="Heat shock 70 kDa protein 1"/>
    <property type="match status" value="1"/>
</dbReference>
<dbReference type="FunFam" id="3.30.30.30:FF:000001">
    <property type="entry name" value="heat shock 70 kDa protein-like"/>
    <property type="match status" value="1"/>
</dbReference>
<dbReference type="FunFam" id="3.30.420.40:FF:000028">
    <property type="entry name" value="heat shock 70 kDa protein-like"/>
    <property type="match status" value="1"/>
</dbReference>
<dbReference type="FunFam" id="3.30.420.40:FF:000135">
    <property type="entry name" value="Heat shock cognate 71 kDa protein"/>
    <property type="match status" value="1"/>
</dbReference>
<dbReference type="FunFam" id="3.90.640.10:FF:000134">
    <property type="entry name" value="Heat shock cognate 71 kDa protein"/>
    <property type="match status" value="1"/>
</dbReference>
<dbReference type="FunFam" id="3.30.420.40:FF:000026">
    <property type="entry name" value="Heat shock protein 70"/>
    <property type="match status" value="1"/>
</dbReference>
<dbReference type="Gene3D" id="1.20.1270.10">
    <property type="match status" value="1"/>
</dbReference>
<dbReference type="Gene3D" id="3.30.30.30">
    <property type="match status" value="1"/>
</dbReference>
<dbReference type="Gene3D" id="3.30.420.40">
    <property type="match status" value="2"/>
</dbReference>
<dbReference type="Gene3D" id="3.90.640.10">
    <property type="entry name" value="Actin, Chain A, domain 4"/>
    <property type="match status" value="1"/>
</dbReference>
<dbReference type="Gene3D" id="2.60.34.10">
    <property type="entry name" value="Substrate Binding Domain Of DNAk, Chain A, domain 1"/>
    <property type="match status" value="1"/>
</dbReference>
<dbReference type="InterPro" id="IPR043129">
    <property type="entry name" value="ATPase_NBD"/>
</dbReference>
<dbReference type="InterPro" id="IPR018181">
    <property type="entry name" value="Heat_shock_70_CS"/>
</dbReference>
<dbReference type="InterPro" id="IPR029048">
    <property type="entry name" value="HSP70_C_sf"/>
</dbReference>
<dbReference type="InterPro" id="IPR029047">
    <property type="entry name" value="HSP70_peptide-bd_sf"/>
</dbReference>
<dbReference type="InterPro" id="IPR013126">
    <property type="entry name" value="Hsp_70_fam"/>
</dbReference>
<dbReference type="NCBIfam" id="NF001413">
    <property type="entry name" value="PRK00290.1"/>
    <property type="match status" value="1"/>
</dbReference>
<dbReference type="PANTHER" id="PTHR19375">
    <property type="entry name" value="HEAT SHOCK PROTEIN 70KDA"/>
    <property type="match status" value="1"/>
</dbReference>
<dbReference type="Pfam" id="PF00012">
    <property type="entry name" value="HSP70"/>
    <property type="match status" value="1"/>
</dbReference>
<dbReference type="PRINTS" id="PR00301">
    <property type="entry name" value="HEATSHOCK70"/>
</dbReference>
<dbReference type="SUPFAM" id="SSF53067">
    <property type="entry name" value="Actin-like ATPase domain"/>
    <property type="match status" value="2"/>
</dbReference>
<dbReference type="SUPFAM" id="SSF100934">
    <property type="entry name" value="Heat shock protein 70kD (HSP70), C-terminal subdomain"/>
    <property type="match status" value="1"/>
</dbReference>
<dbReference type="SUPFAM" id="SSF100920">
    <property type="entry name" value="Heat shock protein 70kD (HSP70), peptide-binding domain"/>
    <property type="match status" value="1"/>
</dbReference>
<dbReference type="PROSITE" id="PS00297">
    <property type="entry name" value="HSP70_1"/>
    <property type="match status" value="1"/>
</dbReference>
<dbReference type="PROSITE" id="PS00329">
    <property type="entry name" value="HSP70_2"/>
    <property type="match status" value="1"/>
</dbReference>
<dbReference type="PROSITE" id="PS01036">
    <property type="entry name" value="HSP70_3"/>
    <property type="match status" value="1"/>
</dbReference>